<feature type="transit peptide" description="Mitochondrion">
    <location>
        <begin position="1"/>
        <end position="35"/>
    </location>
</feature>
<feature type="chain" id="PRO_0000028579" description="Mitochondrial intermediate peptidase">
    <location>
        <begin position="36"/>
        <end position="713"/>
    </location>
</feature>
<feature type="active site" evidence="2">
    <location>
        <position position="496"/>
    </location>
</feature>
<feature type="binding site" evidence="2">
    <location>
        <position position="495"/>
    </location>
    <ligand>
        <name>Zn(2+)</name>
        <dbReference type="ChEBI" id="CHEBI:29105"/>
        <note>catalytic</note>
    </ligand>
</feature>
<feature type="binding site" evidence="2">
    <location>
        <position position="499"/>
    </location>
    <ligand>
        <name>Zn(2+)</name>
        <dbReference type="ChEBI" id="CHEBI:29105"/>
        <note>catalytic</note>
    </ligand>
</feature>
<feature type="binding site" evidence="2">
    <location>
        <position position="502"/>
    </location>
    <ligand>
        <name>Zn(2+)</name>
        <dbReference type="ChEBI" id="CHEBI:29105"/>
        <note>catalytic</note>
    </ligand>
</feature>
<feature type="modified residue" description="N6-acetyllysine" evidence="8">
    <location>
        <position position="126"/>
    </location>
</feature>
<feature type="sequence variant" id="VAR_078009" description="In COXPD31; dbSNP:rs1057518740." evidence="5">
    <original>L</original>
    <variation>Q</variation>
    <location>
        <position position="71"/>
    </location>
</feature>
<feature type="sequence variant" id="VAR_038934" description="In dbSNP:rs2312296.">
    <original>A</original>
    <variation>V</variation>
    <location>
        <position position="137"/>
    </location>
</feature>
<feature type="sequence variant" id="VAR_078010" description="In COXPD31; dbSNP:rs143912947." evidence="5">
    <original>L</original>
    <variation>F</variation>
    <location>
        <position position="306"/>
    </location>
</feature>
<feature type="sequence variant" id="VAR_038935" description="In dbSNP:rs11551114.">
    <original>R</original>
    <variation>Q</variation>
    <location>
        <position position="340"/>
    </location>
</feature>
<feature type="sequence variant" id="VAR_078011" description="In COXPD31; dbSNP:rs1057518741." evidence="5">
    <original>K</original>
    <variation>E</variation>
    <location>
        <position position="343"/>
    </location>
</feature>
<feature type="sequence variant" id="VAR_038936" description="In dbSNP:rs12858248.">
    <original>R</original>
    <variation>H</variation>
    <location>
        <position position="453"/>
    </location>
</feature>
<feature type="sequence variant" id="VAR_038937" description="In dbSNP:rs7333040." evidence="3 4 6">
    <original>S</original>
    <variation>G</variation>
    <location>
        <position position="488"/>
    </location>
</feature>
<feature type="sequence variant" id="VAR_078012" description="In COXPD31; uncertain significance; dbSNP:rs779598020." evidence="5">
    <original>H</original>
    <variation>D</variation>
    <location>
        <position position="512"/>
    </location>
</feature>
<feature type="sequence variant" id="VAR_078013" description="In COXPD31; uncertain significance; dbSNP:rs1057518739." evidence="5">
    <original>L</original>
    <variation>R</variation>
    <location>
        <position position="582"/>
    </location>
</feature>
<feature type="sequence conflict" description="In Ref. 1; AAC51231." evidence="7" ref="1">
    <original>RG</original>
    <variation>AR</variation>
    <location>
        <begin position="63"/>
        <end position="64"/>
    </location>
</feature>
<feature type="sequence conflict" description="In Ref. 1; AAC51231." evidence="7" ref="1">
    <original>E</original>
    <variation>Q</variation>
    <location>
        <position position="200"/>
    </location>
</feature>
<feature type="sequence conflict" description="In Ref. 1; AAC51231." evidence="7" ref="1">
    <original>P</original>
    <variation>A</variation>
    <location>
        <position position="348"/>
    </location>
</feature>
<feature type="sequence conflict" description="In Ref. 1; AAC51231." evidence="7" ref="1">
    <original>V</original>
    <variation>L</variation>
    <location>
        <position position="467"/>
    </location>
</feature>
<gene>
    <name type="primary">MIPEP</name>
    <name type="synonym">MIP</name>
</gene>
<accession>Q99797</accession>
<accession>Q5JV15</accession>
<accession>Q5T9Q9</accession>
<accession>Q96G65</accession>
<sequence>MLCVGRLGGLGARAAALPPRRAGRGSLEAGIRARRVSTSWSPVGAAFNVKPQGSRLDLFGERRGLFGVPELSAPEGFHIAQEKALRKTELLVDRACSTPPGPQTVLIFDELSDSLCRVADLADFVKIAHPEPAFREAAEEACRSIGTMVEKLNTNVDLYQSLQKLLADKKLVDSLDPETRRVAELFMFDFEISGIHLDKEKRKRAVDLNVKILDLSSTFLMGTNFPNKIEKHLLPEHIRRNFTSAGDHIIIDGLHAESPDDLVREAAYKIFLYPNAGQLKCLEELLSSRDLLAKLVGYSTFSHRALQGTIAKNPETVMQFLEKLSDKLSERTLKDFEMIRGMKMKLNPQNSEVMPWDPPYYSGVIRAERYNIEPSLYCPFFSLGACMEGLNILLNRLLGISLYAEQPAKGEVWSEDVRKLAVVHESEGLLGYIYCDFFQRADKPHQDCHFTIRGGRLKEDGDYQLPVVVLMLNLPRSSRSSPTLLTPSMMENLFHEMGHAMHSMLGRTRYQHVTGTRCPTDFAEVPSILMEYFANDYRVVNQFARHYQTGQPLPKNMVSRLCESKKVCAAADMQLQVFYATLDQIYHGKHPLRNSTTDILKETQEKFYGLPYVPNTAWQLRFSHLVGYGARYYSYLMSRAVASMVWKECFLQDPFNRAAGERYRREMLAHGGGREPMLMVEGMLQKCPSVDDFVSALVSDLDLDFETFLMDSE</sequence>
<reference key="1">
    <citation type="journal article" date="1997" name="Genomics">
        <title>Cloning, expression, and chromosomal assignment of the human mitochondrial intermediate peptidase gene (MIPEP).</title>
        <authorList>
            <person name="Chew A."/>
            <person name="Buck E.A."/>
            <person name="Peretz S."/>
            <person name="Sirugo G."/>
            <person name="Rinaldo P."/>
            <person name="Isaya G."/>
        </authorList>
    </citation>
    <scope>NUCLEOTIDE SEQUENCE [MRNA]</scope>
    <scope>VARIANT GLY-488</scope>
    <source>
        <tissue>Liver</tissue>
    </source>
</reference>
<reference key="2">
    <citation type="journal article" date="2004" name="Nat. Genet.">
        <title>Complete sequencing and characterization of 21,243 full-length human cDNAs.</title>
        <authorList>
            <person name="Ota T."/>
            <person name="Suzuki Y."/>
            <person name="Nishikawa T."/>
            <person name="Otsuki T."/>
            <person name="Sugiyama T."/>
            <person name="Irie R."/>
            <person name="Wakamatsu A."/>
            <person name="Hayashi K."/>
            <person name="Sato H."/>
            <person name="Nagai K."/>
            <person name="Kimura K."/>
            <person name="Makita H."/>
            <person name="Sekine M."/>
            <person name="Obayashi M."/>
            <person name="Nishi T."/>
            <person name="Shibahara T."/>
            <person name="Tanaka T."/>
            <person name="Ishii S."/>
            <person name="Yamamoto J."/>
            <person name="Saito K."/>
            <person name="Kawai Y."/>
            <person name="Isono Y."/>
            <person name="Nakamura Y."/>
            <person name="Nagahari K."/>
            <person name="Murakami K."/>
            <person name="Yasuda T."/>
            <person name="Iwayanagi T."/>
            <person name="Wagatsuma M."/>
            <person name="Shiratori A."/>
            <person name="Sudo H."/>
            <person name="Hosoiri T."/>
            <person name="Kaku Y."/>
            <person name="Kodaira H."/>
            <person name="Kondo H."/>
            <person name="Sugawara M."/>
            <person name="Takahashi M."/>
            <person name="Kanda K."/>
            <person name="Yokoi T."/>
            <person name="Furuya T."/>
            <person name="Kikkawa E."/>
            <person name="Omura Y."/>
            <person name="Abe K."/>
            <person name="Kamihara K."/>
            <person name="Katsuta N."/>
            <person name="Sato K."/>
            <person name="Tanikawa M."/>
            <person name="Yamazaki M."/>
            <person name="Ninomiya K."/>
            <person name="Ishibashi T."/>
            <person name="Yamashita H."/>
            <person name="Murakawa K."/>
            <person name="Fujimori K."/>
            <person name="Tanai H."/>
            <person name="Kimata M."/>
            <person name="Watanabe M."/>
            <person name="Hiraoka S."/>
            <person name="Chiba Y."/>
            <person name="Ishida S."/>
            <person name="Ono Y."/>
            <person name="Takiguchi S."/>
            <person name="Watanabe S."/>
            <person name="Yosida M."/>
            <person name="Hotuta T."/>
            <person name="Kusano J."/>
            <person name="Kanehori K."/>
            <person name="Takahashi-Fujii A."/>
            <person name="Hara H."/>
            <person name="Tanase T.-O."/>
            <person name="Nomura Y."/>
            <person name="Togiya S."/>
            <person name="Komai F."/>
            <person name="Hara R."/>
            <person name="Takeuchi K."/>
            <person name="Arita M."/>
            <person name="Imose N."/>
            <person name="Musashino K."/>
            <person name="Yuuki H."/>
            <person name="Oshima A."/>
            <person name="Sasaki N."/>
            <person name="Aotsuka S."/>
            <person name="Yoshikawa Y."/>
            <person name="Matsunawa H."/>
            <person name="Ichihara T."/>
            <person name="Shiohata N."/>
            <person name="Sano S."/>
            <person name="Moriya S."/>
            <person name="Momiyama H."/>
            <person name="Satoh N."/>
            <person name="Takami S."/>
            <person name="Terashima Y."/>
            <person name="Suzuki O."/>
            <person name="Nakagawa S."/>
            <person name="Senoh A."/>
            <person name="Mizoguchi H."/>
            <person name="Goto Y."/>
            <person name="Shimizu F."/>
            <person name="Wakebe H."/>
            <person name="Hishigaki H."/>
            <person name="Watanabe T."/>
            <person name="Sugiyama A."/>
            <person name="Takemoto M."/>
            <person name="Kawakami B."/>
            <person name="Yamazaki M."/>
            <person name="Watanabe K."/>
            <person name="Kumagai A."/>
            <person name="Itakura S."/>
            <person name="Fukuzumi Y."/>
            <person name="Fujimori Y."/>
            <person name="Komiyama M."/>
            <person name="Tashiro H."/>
            <person name="Tanigami A."/>
            <person name="Fujiwara T."/>
            <person name="Ono T."/>
            <person name="Yamada K."/>
            <person name="Fujii Y."/>
            <person name="Ozaki K."/>
            <person name="Hirao M."/>
            <person name="Ohmori Y."/>
            <person name="Kawabata A."/>
            <person name="Hikiji T."/>
            <person name="Kobatake N."/>
            <person name="Inagaki H."/>
            <person name="Ikema Y."/>
            <person name="Okamoto S."/>
            <person name="Okitani R."/>
            <person name="Kawakami T."/>
            <person name="Noguchi S."/>
            <person name="Itoh T."/>
            <person name="Shigeta K."/>
            <person name="Senba T."/>
            <person name="Matsumura K."/>
            <person name="Nakajima Y."/>
            <person name="Mizuno T."/>
            <person name="Morinaga M."/>
            <person name="Sasaki M."/>
            <person name="Togashi T."/>
            <person name="Oyama M."/>
            <person name="Hata H."/>
            <person name="Watanabe M."/>
            <person name="Komatsu T."/>
            <person name="Mizushima-Sugano J."/>
            <person name="Satoh T."/>
            <person name="Shirai Y."/>
            <person name="Takahashi Y."/>
            <person name="Nakagawa K."/>
            <person name="Okumura K."/>
            <person name="Nagase T."/>
            <person name="Nomura N."/>
            <person name="Kikuchi H."/>
            <person name="Masuho Y."/>
            <person name="Yamashita R."/>
            <person name="Nakai K."/>
            <person name="Yada T."/>
            <person name="Nakamura Y."/>
            <person name="Ohara O."/>
            <person name="Isogai T."/>
            <person name="Sugano S."/>
        </authorList>
    </citation>
    <scope>NUCLEOTIDE SEQUENCE [LARGE SCALE MRNA]</scope>
    <scope>VARIANT GLY-488</scope>
</reference>
<reference key="3">
    <citation type="journal article" date="2004" name="Nature">
        <title>The DNA sequence and analysis of human chromosome 13.</title>
        <authorList>
            <person name="Dunham A."/>
            <person name="Matthews L.H."/>
            <person name="Burton J."/>
            <person name="Ashurst J.L."/>
            <person name="Howe K.L."/>
            <person name="Ashcroft K.J."/>
            <person name="Beare D.M."/>
            <person name="Burford D.C."/>
            <person name="Hunt S.E."/>
            <person name="Griffiths-Jones S."/>
            <person name="Jones M.C."/>
            <person name="Keenan S.J."/>
            <person name="Oliver K."/>
            <person name="Scott C.E."/>
            <person name="Ainscough R."/>
            <person name="Almeida J.P."/>
            <person name="Ambrose K.D."/>
            <person name="Andrews D.T."/>
            <person name="Ashwell R.I.S."/>
            <person name="Babbage A.K."/>
            <person name="Bagguley C.L."/>
            <person name="Bailey J."/>
            <person name="Bannerjee R."/>
            <person name="Barlow K.F."/>
            <person name="Bates K."/>
            <person name="Beasley H."/>
            <person name="Bird C.P."/>
            <person name="Bray-Allen S."/>
            <person name="Brown A.J."/>
            <person name="Brown J.Y."/>
            <person name="Burrill W."/>
            <person name="Carder C."/>
            <person name="Carter N.P."/>
            <person name="Chapman J.C."/>
            <person name="Clamp M.E."/>
            <person name="Clark S.Y."/>
            <person name="Clarke G."/>
            <person name="Clee C.M."/>
            <person name="Clegg S.C."/>
            <person name="Cobley V."/>
            <person name="Collins J.E."/>
            <person name="Corby N."/>
            <person name="Coville G.J."/>
            <person name="Deloukas P."/>
            <person name="Dhami P."/>
            <person name="Dunham I."/>
            <person name="Dunn M."/>
            <person name="Earthrowl M.E."/>
            <person name="Ellington A.G."/>
            <person name="Faulkner L."/>
            <person name="Frankish A.G."/>
            <person name="Frankland J."/>
            <person name="French L."/>
            <person name="Garner P."/>
            <person name="Garnett J."/>
            <person name="Gilbert J.G.R."/>
            <person name="Gilson C.J."/>
            <person name="Ghori J."/>
            <person name="Grafham D.V."/>
            <person name="Gribble S.M."/>
            <person name="Griffiths C."/>
            <person name="Hall R.E."/>
            <person name="Hammond S."/>
            <person name="Harley J.L."/>
            <person name="Hart E.A."/>
            <person name="Heath P.D."/>
            <person name="Howden P.J."/>
            <person name="Huckle E.J."/>
            <person name="Hunt P.J."/>
            <person name="Hunt A.R."/>
            <person name="Johnson C."/>
            <person name="Johnson D."/>
            <person name="Kay M."/>
            <person name="Kimberley A.M."/>
            <person name="King A."/>
            <person name="Laird G.K."/>
            <person name="Langford C.J."/>
            <person name="Lawlor S."/>
            <person name="Leongamornlert D.A."/>
            <person name="Lloyd D.M."/>
            <person name="Lloyd C."/>
            <person name="Loveland J.E."/>
            <person name="Lovell J."/>
            <person name="Martin S."/>
            <person name="Mashreghi-Mohammadi M."/>
            <person name="McLaren S.J."/>
            <person name="McMurray A."/>
            <person name="Milne S."/>
            <person name="Moore M.J.F."/>
            <person name="Nickerson T."/>
            <person name="Palmer S.A."/>
            <person name="Pearce A.V."/>
            <person name="Peck A.I."/>
            <person name="Pelan S."/>
            <person name="Phillimore B."/>
            <person name="Porter K.M."/>
            <person name="Rice C.M."/>
            <person name="Searle S."/>
            <person name="Sehra H.K."/>
            <person name="Shownkeen R."/>
            <person name="Skuce C.D."/>
            <person name="Smith M."/>
            <person name="Steward C.A."/>
            <person name="Sycamore N."/>
            <person name="Tester J."/>
            <person name="Thomas D.W."/>
            <person name="Tracey A."/>
            <person name="Tromans A."/>
            <person name="Tubby B."/>
            <person name="Wall M."/>
            <person name="Wallis J.M."/>
            <person name="West A.P."/>
            <person name="Whitehead S.L."/>
            <person name="Willey D.L."/>
            <person name="Wilming L."/>
            <person name="Wray P.W."/>
            <person name="Wright M.W."/>
            <person name="Young L."/>
            <person name="Coulson A."/>
            <person name="Durbin R.M."/>
            <person name="Hubbard T."/>
            <person name="Sulston J.E."/>
            <person name="Beck S."/>
            <person name="Bentley D.R."/>
            <person name="Rogers J."/>
            <person name="Ross M.T."/>
        </authorList>
    </citation>
    <scope>NUCLEOTIDE SEQUENCE [LARGE SCALE GENOMIC DNA]</scope>
</reference>
<reference key="4">
    <citation type="journal article" date="2004" name="Genome Res.">
        <title>The status, quality, and expansion of the NIH full-length cDNA project: the Mammalian Gene Collection (MGC).</title>
        <authorList>
            <consortium name="The MGC Project Team"/>
        </authorList>
    </citation>
    <scope>NUCLEOTIDE SEQUENCE [LARGE SCALE MRNA]</scope>
    <scope>VARIANT GLY-488</scope>
    <source>
        <tissue>Uterus</tissue>
    </source>
</reference>
<reference key="5">
    <citation type="journal article" date="2009" name="Science">
        <title>Lysine acetylation targets protein complexes and co-regulates major cellular functions.</title>
        <authorList>
            <person name="Choudhary C."/>
            <person name="Kumar C."/>
            <person name="Gnad F."/>
            <person name="Nielsen M.L."/>
            <person name="Rehman M."/>
            <person name="Walther T.C."/>
            <person name="Olsen J.V."/>
            <person name="Mann M."/>
        </authorList>
    </citation>
    <scope>ACETYLATION [LARGE SCALE ANALYSIS] AT LYS-126</scope>
    <scope>IDENTIFICATION BY MASS SPECTROMETRY [LARGE SCALE ANALYSIS]</scope>
</reference>
<reference key="6">
    <citation type="journal article" date="2011" name="BMC Syst. Biol.">
        <title>Initial characterization of the human central proteome.</title>
        <authorList>
            <person name="Burkard T.R."/>
            <person name="Planyavsky M."/>
            <person name="Kaupe I."/>
            <person name="Breitwieser F.P."/>
            <person name="Buerckstuemmer T."/>
            <person name="Bennett K.L."/>
            <person name="Superti-Furga G."/>
            <person name="Colinge J."/>
        </authorList>
    </citation>
    <scope>IDENTIFICATION BY MASS SPECTROMETRY [LARGE SCALE ANALYSIS]</scope>
</reference>
<reference key="7">
    <citation type="journal article" date="2016" name="Genome Med.">
        <title>MIPEP recessive variants cause a syndrome of left ventricular non-compaction, hypotonia, and infantile death.</title>
        <authorList>
            <person name="Eldomery M.K."/>
            <person name="Akdemir Z.C."/>
            <person name="Voegtle F.N."/>
            <person name="Charng W.L."/>
            <person name="Mulica P."/>
            <person name="Rosenfeld J.A."/>
            <person name="Gambin T."/>
            <person name="Gu S."/>
            <person name="Burrage L.C."/>
            <person name="Al Shamsi A."/>
            <person name="Penney S."/>
            <person name="Jhangiani S.N."/>
            <person name="Zimmerman H.H."/>
            <person name="Muzny D.M."/>
            <person name="Wang X."/>
            <person name="Tang J."/>
            <person name="Medikonda R."/>
            <person name="Ramachandran P.V."/>
            <person name="Wong L.J."/>
            <person name="Boerwinkle E."/>
            <person name="Gibbs R.A."/>
            <person name="Eng C.M."/>
            <person name="Lalani S.R."/>
            <person name="Hertecant J."/>
            <person name="Rodenburg R.J."/>
            <person name="Abdul-Rahman O.A."/>
            <person name="Yang Y."/>
            <person name="Xia F."/>
            <person name="Wang M.C."/>
            <person name="Lupski J.R."/>
            <person name="Meisinger C."/>
            <person name="Sutton V.R."/>
        </authorList>
    </citation>
    <scope>INVOLVEMENT IN COXPD31</scope>
    <scope>VARIANTS COXPD31 GLN-71; PHE-306; GLU-343; ASP-512 AND ARG-582</scope>
</reference>
<proteinExistence type="evidence at protein level"/>
<comment type="function">
    <text>Cleaves proteins, imported into the mitochondrion, to their mature size.</text>
</comment>
<comment type="catalytic activity">
    <reaction>
        <text>Release of an N-terminal octapeptide as second stage of processing of some proteins imported into the mitochondrion.</text>
        <dbReference type="EC" id="3.4.24.59"/>
    </reaction>
</comment>
<comment type="cofactor">
    <cofactor evidence="1">
        <name>Zn(2+)</name>
        <dbReference type="ChEBI" id="CHEBI:29105"/>
    </cofactor>
    <text evidence="1">Binds 1 zinc ion.</text>
</comment>
<comment type="activity regulation">
    <text evidence="1">Activity is divalent cation-dependent. It is stimulated by manganese, magnesium or calcium ions and reversibly inhibited by zinc, cobalt and iron (By similarity).</text>
</comment>
<comment type="subunit">
    <text evidence="1">Monomer.</text>
</comment>
<comment type="interaction">
    <interactant intactId="EBI-3893060">
        <id>Q99797</id>
    </interactant>
    <interactant intactId="EBI-366258">
        <id>Q16352</id>
        <label>INA</label>
    </interactant>
    <organismsDiffer>false</organismsDiffer>
    <experiments>2</experiments>
</comment>
<comment type="subcellular location">
    <subcellularLocation>
        <location>Mitochondrion matrix</location>
    </subcellularLocation>
</comment>
<comment type="disease" evidence="5">
    <disease id="DI-04916">
        <name>Combined oxidative phosphorylation deficiency 31</name>
        <acronym>COXPD31</acronym>
        <description>An autosomal recessive, severe mitochondrial disease with multisystemic manifestations appearing soon after birth or in early infancy. Clinical features include left ventricular non-compaction, global developmental delay, severe hypotonia, seizures, cataract, and abnormal movements. Death may occur in early childhood.</description>
        <dbReference type="MIM" id="617228"/>
    </disease>
    <text>The disease is caused by variants affecting the gene represented in this entry.</text>
</comment>
<comment type="similarity">
    <text evidence="7">Belongs to the peptidase M3 family.</text>
</comment>
<protein>
    <recommendedName>
        <fullName>Mitochondrial intermediate peptidase</fullName>
        <shortName>MIP</shortName>
        <ecNumber>3.4.24.59</ecNumber>
    </recommendedName>
</protein>
<name>MIPEP_HUMAN</name>
<evidence type="ECO:0000250" key="1"/>
<evidence type="ECO:0000255" key="2">
    <source>
        <dbReference type="PROSITE-ProRule" id="PRU10095"/>
    </source>
</evidence>
<evidence type="ECO:0000269" key="3">
    <source>
    </source>
</evidence>
<evidence type="ECO:0000269" key="4">
    <source>
    </source>
</evidence>
<evidence type="ECO:0000269" key="5">
    <source>
    </source>
</evidence>
<evidence type="ECO:0000269" key="6">
    <source>
    </source>
</evidence>
<evidence type="ECO:0000305" key="7"/>
<evidence type="ECO:0007744" key="8">
    <source>
    </source>
</evidence>
<keyword id="KW-0007">Acetylation</keyword>
<keyword id="KW-0106">Calcium</keyword>
<keyword id="KW-0170">Cobalt</keyword>
<keyword id="KW-0225">Disease variant</keyword>
<keyword id="KW-0378">Hydrolase</keyword>
<keyword id="KW-0408">Iron</keyword>
<keyword id="KW-0460">Magnesium</keyword>
<keyword id="KW-0464">Manganese</keyword>
<keyword id="KW-0479">Metal-binding</keyword>
<keyword id="KW-0482">Metalloprotease</keyword>
<keyword id="KW-0496">Mitochondrion</keyword>
<keyword id="KW-1274">Primary mitochondrial disease</keyword>
<keyword id="KW-0645">Protease</keyword>
<keyword id="KW-1267">Proteomics identification</keyword>
<keyword id="KW-1185">Reference proteome</keyword>
<keyword id="KW-0809">Transit peptide</keyword>
<keyword id="KW-0862">Zinc</keyword>
<organism>
    <name type="scientific">Homo sapiens</name>
    <name type="common">Human</name>
    <dbReference type="NCBI Taxonomy" id="9606"/>
    <lineage>
        <taxon>Eukaryota</taxon>
        <taxon>Metazoa</taxon>
        <taxon>Chordata</taxon>
        <taxon>Craniata</taxon>
        <taxon>Vertebrata</taxon>
        <taxon>Euteleostomi</taxon>
        <taxon>Mammalia</taxon>
        <taxon>Eutheria</taxon>
        <taxon>Euarchontoglires</taxon>
        <taxon>Primates</taxon>
        <taxon>Haplorrhini</taxon>
        <taxon>Catarrhini</taxon>
        <taxon>Hominidae</taxon>
        <taxon>Homo</taxon>
    </lineage>
</organism>
<dbReference type="EC" id="3.4.24.59"/>
<dbReference type="EMBL" id="U80034">
    <property type="protein sequence ID" value="AAC51231.1"/>
    <property type="molecule type" value="mRNA"/>
</dbReference>
<dbReference type="EMBL" id="AK291923">
    <property type="protein sequence ID" value="BAF84612.1"/>
    <property type="molecule type" value="mRNA"/>
</dbReference>
<dbReference type="EMBL" id="AL157368">
    <property type="status" value="NOT_ANNOTATED_CDS"/>
    <property type="molecule type" value="Genomic_DNA"/>
</dbReference>
<dbReference type="EMBL" id="AL139080">
    <property type="status" value="NOT_ANNOTATED_CDS"/>
    <property type="molecule type" value="Genomic_DNA"/>
</dbReference>
<dbReference type="EMBL" id="AL445985">
    <property type="status" value="NOT_ANNOTATED_CDS"/>
    <property type="molecule type" value="Genomic_DNA"/>
</dbReference>
<dbReference type="EMBL" id="BC009934">
    <property type="protein sequence ID" value="AAH09934.1"/>
    <property type="molecule type" value="mRNA"/>
</dbReference>
<dbReference type="CCDS" id="CCDS9303.1"/>
<dbReference type="RefSeq" id="NP_005923.3">
    <property type="nucleotide sequence ID" value="NM_005932.4"/>
</dbReference>
<dbReference type="SMR" id="Q99797"/>
<dbReference type="BioGRID" id="110431">
    <property type="interactions" value="106"/>
</dbReference>
<dbReference type="FunCoup" id="Q99797">
    <property type="interactions" value="1805"/>
</dbReference>
<dbReference type="IntAct" id="Q99797">
    <property type="interactions" value="64"/>
</dbReference>
<dbReference type="MINT" id="Q99797"/>
<dbReference type="STRING" id="9606.ENSP00000371607"/>
<dbReference type="MEROPS" id="M03.006"/>
<dbReference type="iPTMnet" id="Q99797"/>
<dbReference type="MetOSite" id="Q99797"/>
<dbReference type="PhosphoSitePlus" id="Q99797"/>
<dbReference type="SwissPalm" id="Q99797"/>
<dbReference type="BioMuta" id="MIPEP"/>
<dbReference type="DMDM" id="182639267"/>
<dbReference type="jPOST" id="Q99797"/>
<dbReference type="MassIVE" id="Q99797"/>
<dbReference type="PaxDb" id="9606-ENSP00000371607"/>
<dbReference type="PeptideAtlas" id="Q99797"/>
<dbReference type="ProteomicsDB" id="78477"/>
<dbReference type="Pumba" id="Q99797"/>
<dbReference type="Antibodypedia" id="22428">
    <property type="antibodies" value="400 antibodies from 27 providers"/>
</dbReference>
<dbReference type="DNASU" id="4285"/>
<dbReference type="Ensembl" id="ENST00000382172.4">
    <property type="protein sequence ID" value="ENSP00000371607.3"/>
    <property type="gene ID" value="ENSG00000027001.10"/>
</dbReference>
<dbReference type="GeneID" id="4285"/>
<dbReference type="KEGG" id="hsa:4285"/>
<dbReference type="MANE-Select" id="ENST00000382172.4">
    <property type="protein sequence ID" value="ENSP00000371607.3"/>
    <property type="RefSeq nucleotide sequence ID" value="NM_005932.4"/>
    <property type="RefSeq protein sequence ID" value="NP_005923.3"/>
</dbReference>
<dbReference type="UCSC" id="uc001uox.5">
    <property type="organism name" value="human"/>
</dbReference>
<dbReference type="AGR" id="HGNC:7104"/>
<dbReference type="CTD" id="4285"/>
<dbReference type="DisGeNET" id="4285"/>
<dbReference type="GeneCards" id="MIPEP"/>
<dbReference type="HGNC" id="HGNC:7104">
    <property type="gene designation" value="MIPEP"/>
</dbReference>
<dbReference type="HPA" id="ENSG00000027001">
    <property type="expression patterns" value="Low tissue specificity"/>
</dbReference>
<dbReference type="MalaCards" id="MIPEP"/>
<dbReference type="MIM" id="602241">
    <property type="type" value="gene"/>
</dbReference>
<dbReference type="MIM" id="617228">
    <property type="type" value="phenotype"/>
</dbReference>
<dbReference type="neXtProt" id="NX_Q99797"/>
<dbReference type="OpenTargets" id="ENSG00000027001"/>
<dbReference type="Orphanet" id="478049">
    <property type="disease" value="Lethal left ventricular non-compaction-seizures-hypotonia-cataract-developmental delay syndrome"/>
</dbReference>
<dbReference type="PharmGKB" id="PA30822"/>
<dbReference type="VEuPathDB" id="HostDB:ENSG00000027001"/>
<dbReference type="eggNOG" id="KOG2090">
    <property type="taxonomic scope" value="Eukaryota"/>
</dbReference>
<dbReference type="GeneTree" id="ENSGT00950000183171"/>
<dbReference type="HOGENOM" id="CLU_001805_0_2_1"/>
<dbReference type="InParanoid" id="Q99797"/>
<dbReference type="OMA" id="ALMFEYM"/>
<dbReference type="OrthoDB" id="17530at2759"/>
<dbReference type="PAN-GO" id="Q99797">
    <property type="GO annotations" value="4 GO annotations based on evolutionary models"/>
</dbReference>
<dbReference type="PhylomeDB" id="Q99797"/>
<dbReference type="TreeFam" id="TF105715"/>
<dbReference type="PathwayCommons" id="Q99797"/>
<dbReference type="SignaLink" id="Q99797"/>
<dbReference type="BioGRID-ORCS" id="4285">
    <property type="hits" value="275 hits in 1159 CRISPR screens"/>
</dbReference>
<dbReference type="ChiTaRS" id="MIPEP">
    <property type="organism name" value="human"/>
</dbReference>
<dbReference type="GenomeRNAi" id="4285"/>
<dbReference type="Pharos" id="Q99797">
    <property type="development level" value="Tbio"/>
</dbReference>
<dbReference type="PRO" id="PR:Q99797"/>
<dbReference type="Proteomes" id="UP000005640">
    <property type="component" value="Chromosome 13"/>
</dbReference>
<dbReference type="RNAct" id="Q99797">
    <property type="molecule type" value="protein"/>
</dbReference>
<dbReference type="Bgee" id="ENSG00000027001">
    <property type="expression patterns" value="Expressed in right atrium auricular region and 162 other cell types or tissues"/>
</dbReference>
<dbReference type="GO" id="GO:0005759">
    <property type="term" value="C:mitochondrial matrix"/>
    <property type="evidence" value="ECO:0007669"/>
    <property type="project" value="UniProtKB-SubCell"/>
</dbReference>
<dbReference type="GO" id="GO:0005739">
    <property type="term" value="C:mitochondrion"/>
    <property type="evidence" value="ECO:0000314"/>
    <property type="project" value="HPA"/>
</dbReference>
<dbReference type="GO" id="GO:0046872">
    <property type="term" value="F:metal ion binding"/>
    <property type="evidence" value="ECO:0007669"/>
    <property type="project" value="UniProtKB-KW"/>
</dbReference>
<dbReference type="GO" id="GO:0004222">
    <property type="term" value="F:metalloendopeptidase activity"/>
    <property type="evidence" value="ECO:0000318"/>
    <property type="project" value="GO_Central"/>
</dbReference>
<dbReference type="GO" id="GO:0006518">
    <property type="term" value="P:peptide metabolic process"/>
    <property type="evidence" value="ECO:0000318"/>
    <property type="project" value="GO_Central"/>
</dbReference>
<dbReference type="GO" id="GO:0006627">
    <property type="term" value="P:protein processing involved in protein targeting to mitochondrion"/>
    <property type="evidence" value="ECO:0000318"/>
    <property type="project" value="GO_Central"/>
</dbReference>
<dbReference type="CDD" id="cd06457">
    <property type="entry name" value="M3A_MIP"/>
    <property type="match status" value="1"/>
</dbReference>
<dbReference type="FunFam" id="1.10.1370.40:FF:000002">
    <property type="entry name" value="Mitochondrial intermediate peptidase"/>
    <property type="match status" value="1"/>
</dbReference>
<dbReference type="FunFam" id="3.40.390.10:FF:000013">
    <property type="entry name" value="Mitochondrial intermediate peptidase"/>
    <property type="match status" value="1"/>
</dbReference>
<dbReference type="FunFam" id="1.10.1370.10:FF:000026">
    <property type="entry name" value="Si:ch73-1a9.4"/>
    <property type="match status" value="1"/>
</dbReference>
<dbReference type="Gene3D" id="1.10.1370.40">
    <property type="match status" value="1"/>
</dbReference>
<dbReference type="Gene3D" id="3.40.390.10">
    <property type="entry name" value="Collagenase (Catalytic Domain)"/>
    <property type="match status" value="1"/>
</dbReference>
<dbReference type="Gene3D" id="1.10.1370.10">
    <property type="entry name" value="Neurolysin, domain 3"/>
    <property type="match status" value="1"/>
</dbReference>
<dbReference type="InterPro" id="IPR033851">
    <property type="entry name" value="M3A_MIP"/>
</dbReference>
<dbReference type="InterPro" id="IPR024079">
    <property type="entry name" value="MetalloPept_cat_dom_sf"/>
</dbReference>
<dbReference type="InterPro" id="IPR024077">
    <property type="entry name" value="Neurolysin/TOP_dom2"/>
</dbReference>
<dbReference type="InterPro" id="IPR045090">
    <property type="entry name" value="Pept_M3A_M3B"/>
</dbReference>
<dbReference type="InterPro" id="IPR001567">
    <property type="entry name" value="Pept_M3A_M3B_dom"/>
</dbReference>
<dbReference type="PANTHER" id="PTHR11804:SF79">
    <property type="entry name" value="MITOCHONDRIAL INTERMEDIATE PEPTIDASE"/>
    <property type="match status" value="1"/>
</dbReference>
<dbReference type="PANTHER" id="PTHR11804">
    <property type="entry name" value="PROTEASE M3 THIMET OLIGOPEPTIDASE-RELATED"/>
    <property type="match status" value="1"/>
</dbReference>
<dbReference type="Pfam" id="PF01432">
    <property type="entry name" value="Peptidase_M3"/>
    <property type="match status" value="1"/>
</dbReference>
<dbReference type="SUPFAM" id="SSF55486">
    <property type="entry name" value="Metalloproteases ('zincins'), catalytic domain"/>
    <property type="match status" value="1"/>
</dbReference>
<dbReference type="PROSITE" id="PS00142">
    <property type="entry name" value="ZINC_PROTEASE"/>
    <property type="match status" value="1"/>
</dbReference>